<protein>
    <recommendedName>
        <fullName>MATH domain and coiled-coil domain-containing protein At3g58340</fullName>
    </recommendedName>
    <alternativeName>
        <fullName>RTM3-like protein At3g58340</fullName>
    </alternativeName>
</protein>
<feature type="chain" id="PRO_0000429300" description="MATH domain and coiled-coil domain-containing protein At3g58340">
    <location>
        <begin position="1"/>
        <end position="325"/>
    </location>
</feature>
<feature type="domain" description="MATH" evidence="2">
    <location>
        <begin position="6"/>
        <end position="131"/>
    </location>
</feature>
<feature type="coiled-coil region" evidence="1">
    <location>
        <begin position="266"/>
        <end position="315"/>
    </location>
</feature>
<proteinExistence type="predicted"/>
<name>MCC23_ARATH</name>
<accession>Q9M2I2</accession>
<dbReference type="EMBL" id="AL137081">
    <property type="protein sequence ID" value="CAB68172.1"/>
    <property type="molecule type" value="Genomic_DNA"/>
</dbReference>
<dbReference type="EMBL" id="CP002686">
    <property type="protein sequence ID" value="AEE79771.1"/>
    <property type="molecule type" value="Genomic_DNA"/>
</dbReference>
<dbReference type="PIR" id="T45994">
    <property type="entry name" value="T45994"/>
</dbReference>
<dbReference type="RefSeq" id="NP_191393.1">
    <property type="nucleotide sequence ID" value="NM_115696.1"/>
</dbReference>
<dbReference type="SMR" id="Q9M2I2"/>
<dbReference type="FunCoup" id="Q9M2I2">
    <property type="interactions" value="47"/>
</dbReference>
<dbReference type="iPTMnet" id="Q9M2I2"/>
<dbReference type="PaxDb" id="3702-AT3G58340.1"/>
<dbReference type="EnsemblPlants" id="AT3G58340.1">
    <property type="protein sequence ID" value="AT3G58340.1"/>
    <property type="gene ID" value="AT3G58340"/>
</dbReference>
<dbReference type="GeneID" id="825003"/>
<dbReference type="Gramene" id="AT3G58340.1">
    <property type="protein sequence ID" value="AT3G58340.1"/>
    <property type="gene ID" value="AT3G58340"/>
</dbReference>
<dbReference type="KEGG" id="ath:AT3G58340"/>
<dbReference type="Araport" id="AT3G58340"/>
<dbReference type="TAIR" id="AT3G58340"/>
<dbReference type="eggNOG" id="KOG1987">
    <property type="taxonomic scope" value="Eukaryota"/>
</dbReference>
<dbReference type="HOGENOM" id="CLU_026537_0_0_1"/>
<dbReference type="InParanoid" id="Q9M2I2"/>
<dbReference type="OMA" id="HRETNIW"/>
<dbReference type="PhylomeDB" id="Q9M2I2"/>
<dbReference type="PRO" id="PR:Q9M2I2"/>
<dbReference type="Proteomes" id="UP000006548">
    <property type="component" value="Chromosome 3"/>
</dbReference>
<dbReference type="ExpressionAtlas" id="Q9M2I2">
    <property type="expression patterns" value="baseline"/>
</dbReference>
<dbReference type="CDD" id="cd00121">
    <property type="entry name" value="MATH"/>
    <property type="match status" value="1"/>
</dbReference>
<dbReference type="Gene3D" id="2.60.210.10">
    <property type="entry name" value="Apoptosis, Tumor Necrosis Factor Receptor Associated Protein 2, Chain A"/>
    <property type="match status" value="1"/>
</dbReference>
<dbReference type="InterPro" id="IPR050804">
    <property type="entry name" value="MATH-CC_domain_protein"/>
</dbReference>
<dbReference type="InterPro" id="IPR002083">
    <property type="entry name" value="MATH/TRAF_dom"/>
</dbReference>
<dbReference type="InterPro" id="IPR008974">
    <property type="entry name" value="TRAF-like"/>
</dbReference>
<dbReference type="PANTHER" id="PTHR46236:SF33">
    <property type="entry name" value="MEPRIN AND TRAF-LIKE DOMAIN-CONTAINING PROTEIN-RELATED"/>
    <property type="match status" value="1"/>
</dbReference>
<dbReference type="PANTHER" id="PTHR46236">
    <property type="entry name" value="TRAF-LIKE SUPERFAMILY PROTEIN"/>
    <property type="match status" value="1"/>
</dbReference>
<dbReference type="Pfam" id="PF22486">
    <property type="entry name" value="MATH_2"/>
    <property type="match status" value="1"/>
</dbReference>
<dbReference type="SMART" id="SM00061">
    <property type="entry name" value="MATH"/>
    <property type="match status" value="1"/>
</dbReference>
<dbReference type="SUPFAM" id="SSF49599">
    <property type="entry name" value="TRAF domain-like"/>
    <property type="match status" value="1"/>
</dbReference>
<dbReference type="PROSITE" id="PS50144">
    <property type="entry name" value="MATH"/>
    <property type="match status" value="1"/>
</dbReference>
<keyword id="KW-0175">Coiled coil</keyword>
<keyword id="KW-1185">Reference proteome</keyword>
<sequence length="325" mass="37278">MAKAVDKKFCWEIKNFSSLNSERCHSVPVVIGDCKWRLVAFPKGYKADYLSLYLEVADFKSLPSGWRRYVKFRACIVNQLSQELSVQQETQRWFDQNAPGWGFENMLLLTELNAKDGGFLVNGQVMIVAEVEFLEVIGTLDESEEIIKSSDLINKTQEVAQQVKEIIQPNDLINKTQEVAQQVKESIDVNGFQVLPSQVESVRRIFKKHPDIAVGFQVKNQHLRKTFMNFLVNVIETMCQSLQELSNEDLVEVDIALTYLKDAGFKVDWLEKKLDHVKEKKEKEQSGLIILQGIEQQLHELMHKCEKKKSEVLSVGAPLKFDDVV</sequence>
<gene>
    <name type="ordered locus">At3g58340</name>
    <name type="ORF">F9D24.250</name>
</gene>
<organism>
    <name type="scientific">Arabidopsis thaliana</name>
    <name type="common">Mouse-ear cress</name>
    <dbReference type="NCBI Taxonomy" id="3702"/>
    <lineage>
        <taxon>Eukaryota</taxon>
        <taxon>Viridiplantae</taxon>
        <taxon>Streptophyta</taxon>
        <taxon>Embryophyta</taxon>
        <taxon>Tracheophyta</taxon>
        <taxon>Spermatophyta</taxon>
        <taxon>Magnoliopsida</taxon>
        <taxon>eudicotyledons</taxon>
        <taxon>Gunneridae</taxon>
        <taxon>Pentapetalae</taxon>
        <taxon>rosids</taxon>
        <taxon>malvids</taxon>
        <taxon>Brassicales</taxon>
        <taxon>Brassicaceae</taxon>
        <taxon>Camelineae</taxon>
        <taxon>Arabidopsis</taxon>
    </lineage>
</organism>
<evidence type="ECO:0000255" key="1"/>
<evidence type="ECO:0000255" key="2">
    <source>
        <dbReference type="PROSITE-ProRule" id="PRU00129"/>
    </source>
</evidence>
<reference key="1">
    <citation type="journal article" date="2000" name="Nature">
        <title>Sequence and analysis of chromosome 3 of the plant Arabidopsis thaliana.</title>
        <authorList>
            <person name="Salanoubat M."/>
            <person name="Lemcke K."/>
            <person name="Rieger M."/>
            <person name="Ansorge W."/>
            <person name="Unseld M."/>
            <person name="Fartmann B."/>
            <person name="Valle G."/>
            <person name="Bloecker H."/>
            <person name="Perez-Alonso M."/>
            <person name="Obermaier B."/>
            <person name="Delseny M."/>
            <person name="Boutry M."/>
            <person name="Grivell L.A."/>
            <person name="Mache R."/>
            <person name="Puigdomenech P."/>
            <person name="De Simone V."/>
            <person name="Choisne N."/>
            <person name="Artiguenave F."/>
            <person name="Robert C."/>
            <person name="Brottier P."/>
            <person name="Wincker P."/>
            <person name="Cattolico L."/>
            <person name="Weissenbach J."/>
            <person name="Saurin W."/>
            <person name="Quetier F."/>
            <person name="Schaefer M."/>
            <person name="Mueller-Auer S."/>
            <person name="Gabel C."/>
            <person name="Fuchs M."/>
            <person name="Benes V."/>
            <person name="Wurmbach E."/>
            <person name="Drzonek H."/>
            <person name="Erfle H."/>
            <person name="Jordan N."/>
            <person name="Bangert S."/>
            <person name="Wiedelmann R."/>
            <person name="Kranz H."/>
            <person name="Voss H."/>
            <person name="Holland R."/>
            <person name="Brandt P."/>
            <person name="Nyakatura G."/>
            <person name="Vezzi A."/>
            <person name="D'Angelo M."/>
            <person name="Pallavicini A."/>
            <person name="Toppo S."/>
            <person name="Simionati B."/>
            <person name="Conrad A."/>
            <person name="Hornischer K."/>
            <person name="Kauer G."/>
            <person name="Loehnert T.-H."/>
            <person name="Nordsiek G."/>
            <person name="Reichelt J."/>
            <person name="Scharfe M."/>
            <person name="Schoen O."/>
            <person name="Bargues M."/>
            <person name="Terol J."/>
            <person name="Climent J."/>
            <person name="Navarro P."/>
            <person name="Collado C."/>
            <person name="Perez-Perez A."/>
            <person name="Ottenwaelder B."/>
            <person name="Duchemin D."/>
            <person name="Cooke R."/>
            <person name="Laudie M."/>
            <person name="Berger-Llauro C."/>
            <person name="Purnelle B."/>
            <person name="Masuy D."/>
            <person name="de Haan M."/>
            <person name="Maarse A.C."/>
            <person name="Alcaraz J.-P."/>
            <person name="Cottet A."/>
            <person name="Casacuberta E."/>
            <person name="Monfort A."/>
            <person name="Argiriou A."/>
            <person name="Flores M."/>
            <person name="Liguori R."/>
            <person name="Vitale D."/>
            <person name="Mannhaupt G."/>
            <person name="Haase D."/>
            <person name="Schoof H."/>
            <person name="Rudd S."/>
            <person name="Zaccaria P."/>
            <person name="Mewes H.-W."/>
            <person name="Mayer K.F.X."/>
            <person name="Kaul S."/>
            <person name="Town C.D."/>
            <person name="Koo H.L."/>
            <person name="Tallon L.J."/>
            <person name="Jenkins J."/>
            <person name="Rooney T."/>
            <person name="Rizzo M."/>
            <person name="Walts A."/>
            <person name="Utterback T."/>
            <person name="Fujii C.Y."/>
            <person name="Shea T.P."/>
            <person name="Creasy T.H."/>
            <person name="Haas B."/>
            <person name="Maiti R."/>
            <person name="Wu D."/>
            <person name="Peterson J."/>
            <person name="Van Aken S."/>
            <person name="Pai G."/>
            <person name="Militscher J."/>
            <person name="Sellers P."/>
            <person name="Gill J.E."/>
            <person name="Feldblyum T.V."/>
            <person name="Preuss D."/>
            <person name="Lin X."/>
            <person name="Nierman W.C."/>
            <person name="Salzberg S.L."/>
            <person name="White O."/>
            <person name="Venter J.C."/>
            <person name="Fraser C.M."/>
            <person name="Kaneko T."/>
            <person name="Nakamura Y."/>
            <person name="Sato S."/>
            <person name="Kato T."/>
            <person name="Asamizu E."/>
            <person name="Sasamoto S."/>
            <person name="Kimura T."/>
            <person name="Idesawa K."/>
            <person name="Kawashima K."/>
            <person name="Kishida Y."/>
            <person name="Kiyokawa C."/>
            <person name="Kohara M."/>
            <person name="Matsumoto M."/>
            <person name="Matsuno A."/>
            <person name="Muraki A."/>
            <person name="Nakayama S."/>
            <person name="Nakazaki N."/>
            <person name="Shinpo S."/>
            <person name="Takeuchi C."/>
            <person name="Wada T."/>
            <person name="Watanabe A."/>
            <person name="Yamada M."/>
            <person name="Yasuda M."/>
            <person name="Tabata S."/>
        </authorList>
    </citation>
    <scope>NUCLEOTIDE SEQUENCE [LARGE SCALE GENOMIC DNA]</scope>
    <source>
        <strain>cv. Columbia</strain>
    </source>
</reference>
<reference key="2">
    <citation type="journal article" date="2017" name="Plant J.">
        <title>Araport11: a complete reannotation of the Arabidopsis thaliana reference genome.</title>
        <authorList>
            <person name="Cheng C.Y."/>
            <person name="Krishnakumar V."/>
            <person name="Chan A.P."/>
            <person name="Thibaud-Nissen F."/>
            <person name="Schobel S."/>
            <person name="Town C.D."/>
        </authorList>
    </citation>
    <scope>GENOME REANNOTATION</scope>
    <source>
        <strain>cv. Columbia</strain>
    </source>
</reference>
<reference key="3">
    <citation type="journal article" date="2010" name="Plant Physiol.">
        <title>RTM3, which controls long-distance movement of potyviruses, is a member of a new plant gene family encoding a meprin and TRAF homology domain-containing protein.</title>
        <authorList>
            <person name="Cosson P."/>
            <person name="Sofer L."/>
            <person name="Le Q.H."/>
            <person name="Leger V."/>
            <person name="Schurdi-Levraud V."/>
            <person name="Whitham S.A."/>
            <person name="Yamamoto M.L."/>
            <person name="Gopalan S."/>
            <person name="Le Gall O."/>
            <person name="Candresse T."/>
            <person name="Carrington J.C."/>
            <person name="Revers F."/>
        </authorList>
    </citation>
    <scope>GENE FAMILY</scope>
</reference>